<proteinExistence type="inferred from homology"/>
<dbReference type="EMBL" id="CP000560">
    <property type="protein sequence ID" value="ABS72569.1"/>
    <property type="molecule type" value="Genomic_DNA"/>
</dbReference>
<dbReference type="RefSeq" id="WP_003156475.1">
    <property type="nucleotide sequence ID" value="NC_009725.2"/>
</dbReference>
<dbReference type="SMR" id="A7Z0P3"/>
<dbReference type="GeneID" id="93079285"/>
<dbReference type="KEGG" id="bay:RBAM_001460"/>
<dbReference type="HOGENOM" id="CLU_083987_3_3_9"/>
<dbReference type="Proteomes" id="UP000001120">
    <property type="component" value="Chromosome"/>
</dbReference>
<dbReference type="GO" id="GO:0022625">
    <property type="term" value="C:cytosolic large ribosomal subunit"/>
    <property type="evidence" value="ECO:0007669"/>
    <property type="project" value="TreeGrafter"/>
</dbReference>
<dbReference type="GO" id="GO:0019843">
    <property type="term" value="F:rRNA binding"/>
    <property type="evidence" value="ECO:0007669"/>
    <property type="project" value="UniProtKB-UniRule"/>
</dbReference>
<dbReference type="GO" id="GO:0003735">
    <property type="term" value="F:structural constituent of ribosome"/>
    <property type="evidence" value="ECO:0007669"/>
    <property type="project" value="InterPro"/>
</dbReference>
<dbReference type="GO" id="GO:0006412">
    <property type="term" value="P:translation"/>
    <property type="evidence" value="ECO:0007669"/>
    <property type="project" value="UniProtKB-UniRule"/>
</dbReference>
<dbReference type="CDD" id="cd00336">
    <property type="entry name" value="Ribosomal_L22"/>
    <property type="match status" value="1"/>
</dbReference>
<dbReference type="FunFam" id="3.90.470.10:FF:000001">
    <property type="entry name" value="50S ribosomal protein L22"/>
    <property type="match status" value="1"/>
</dbReference>
<dbReference type="Gene3D" id="3.90.470.10">
    <property type="entry name" value="Ribosomal protein L22/L17"/>
    <property type="match status" value="1"/>
</dbReference>
<dbReference type="HAMAP" id="MF_01331_B">
    <property type="entry name" value="Ribosomal_uL22_B"/>
    <property type="match status" value="1"/>
</dbReference>
<dbReference type="InterPro" id="IPR001063">
    <property type="entry name" value="Ribosomal_uL22"/>
</dbReference>
<dbReference type="InterPro" id="IPR005727">
    <property type="entry name" value="Ribosomal_uL22_bac/chlpt-type"/>
</dbReference>
<dbReference type="InterPro" id="IPR047867">
    <property type="entry name" value="Ribosomal_uL22_bac/org-type"/>
</dbReference>
<dbReference type="InterPro" id="IPR018260">
    <property type="entry name" value="Ribosomal_uL22_CS"/>
</dbReference>
<dbReference type="InterPro" id="IPR036394">
    <property type="entry name" value="Ribosomal_uL22_sf"/>
</dbReference>
<dbReference type="NCBIfam" id="TIGR01044">
    <property type="entry name" value="rplV_bact"/>
    <property type="match status" value="1"/>
</dbReference>
<dbReference type="PANTHER" id="PTHR13501">
    <property type="entry name" value="CHLOROPLAST 50S RIBOSOMAL PROTEIN L22-RELATED"/>
    <property type="match status" value="1"/>
</dbReference>
<dbReference type="PANTHER" id="PTHR13501:SF8">
    <property type="entry name" value="LARGE RIBOSOMAL SUBUNIT PROTEIN UL22M"/>
    <property type="match status" value="1"/>
</dbReference>
<dbReference type="Pfam" id="PF00237">
    <property type="entry name" value="Ribosomal_L22"/>
    <property type="match status" value="1"/>
</dbReference>
<dbReference type="SUPFAM" id="SSF54843">
    <property type="entry name" value="Ribosomal protein L22"/>
    <property type="match status" value="1"/>
</dbReference>
<dbReference type="PROSITE" id="PS00464">
    <property type="entry name" value="RIBOSOMAL_L22"/>
    <property type="match status" value="1"/>
</dbReference>
<sequence length="113" mass="12460">MQAKAVARTVRIAPRKARLVMDLIRGKQVGEAVSILNLTPRAASPIIEKVLKSAIANAEHNYEMDANNLVISQAFVDEGPTLKRFRPRAMGRASQINKRTSHITIVVSEKKEG</sequence>
<protein>
    <recommendedName>
        <fullName evidence="1">Large ribosomal subunit protein uL22</fullName>
    </recommendedName>
    <alternativeName>
        <fullName evidence="2">50S ribosomal protein L22</fullName>
    </alternativeName>
</protein>
<comment type="function">
    <text evidence="1">This protein binds specifically to 23S rRNA; its binding is stimulated by other ribosomal proteins, e.g. L4, L17, and L20. It is important during the early stages of 50S assembly. It makes multiple contacts with different domains of the 23S rRNA in the assembled 50S subunit and ribosome (By similarity).</text>
</comment>
<comment type="function">
    <text evidence="1">The globular domain of the protein is located near the polypeptide exit tunnel on the outside of the subunit, while an extended beta-hairpin is found that lines the wall of the exit tunnel in the center of the 70S ribosome.</text>
</comment>
<comment type="subunit">
    <text evidence="1">Part of the 50S ribosomal subunit.</text>
</comment>
<comment type="similarity">
    <text evidence="1">Belongs to the universal ribosomal protein uL22 family.</text>
</comment>
<gene>
    <name evidence="1" type="primary">rplV</name>
    <name type="ordered locus">RBAM_001460</name>
</gene>
<feature type="chain" id="PRO_1000052538" description="Large ribosomal subunit protein uL22">
    <location>
        <begin position="1"/>
        <end position="113"/>
    </location>
</feature>
<keyword id="KW-0687">Ribonucleoprotein</keyword>
<keyword id="KW-0689">Ribosomal protein</keyword>
<keyword id="KW-0694">RNA-binding</keyword>
<keyword id="KW-0699">rRNA-binding</keyword>
<accession>A7Z0P3</accession>
<evidence type="ECO:0000255" key="1">
    <source>
        <dbReference type="HAMAP-Rule" id="MF_01331"/>
    </source>
</evidence>
<evidence type="ECO:0000305" key="2"/>
<organism>
    <name type="scientific">Bacillus velezensis (strain DSM 23117 / BGSC 10A6 / LMG 26770 / FZB42)</name>
    <name type="common">Bacillus amyloliquefaciens subsp. plantarum</name>
    <dbReference type="NCBI Taxonomy" id="326423"/>
    <lineage>
        <taxon>Bacteria</taxon>
        <taxon>Bacillati</taxon>
        <taxon>Bacillota</taxon>
        <taxon>Bacilli</taxon>
        <taxon>Bacillales</taxon>
        <taxon>Bacillaceae</taxon>
        <taxon>Bacillus</taxon>
        <taxon>Bacillus amyloliquefaciens group</taxon>
    </lineage>
</organism>
<reference key="1">
    <citation type="journal article" date="2007" name="Nat. Biotechnol.">
        <title>Comparative analysis of the complete genome sequence of the plant growth-promoting bacterium Bacillus amyloliquefaciens FZB42.</title>
        <authorList>
            <person name="Chen X.H."/>
            <person name="Koumoutsi A."/>
            <person name="Scholz R."/>
            <person name="Eisenreich A."/>
            <person name="Schneider K."/>
            <person name="Heinemeyer I."/>
            <person name="Morgenstern B."/>
            <person name="Voss B."/>
            <person name="Hess W.R."/>
            <person name="Reva O."/>
            <person name="Junge H."/>
            <person name="Voigt B."/>
            <person name="Jungblut P.R."/>
            <person name="Vater J."/>
            <person name="Suessmuth R."/>
            <person name="Liesegang H."/>
            <person name="Strittmatter A."/>
            <person name="Gottschalk G."/>
            <person name="Borriss R."/>
        </authorList>
    </citation>
    <scope>NUCLEOTIDE SEQUENCE [LARGE SCALE GENOMIC DNA]</scope>
    <source>
        <strain>DSM 23117 / BGSC 10A6 / LMG 26770 / FZB42</strain>
    </source>
</reference>
<name>RL22_BACVZ</name>